<keyword id="KW-0963">Cytoplasm</keyword>
<keyword id="KW-0448">Lipopolysaccharide biosynthesis</keyword>
<keyword id="KW-0808">Transferase</keyword>
<evidence type="ECO:0000255" key="1">
    <source>
        <dbReference type="HAMAP-Rule" id="MF_00056"/>
    </source>
</evidence>
<name>KDSA_VIBC1</name>
<feature type="chain" id="PRO_1000003351" description="2-dehydro-3-deoxyphosphooctonate aldolase">
    <location>
        <begin position="1"/>
        <end position="283"/>
    </location>
</feature>
<accession>A7MY69</accession>
<comment type="catalytic activity">
    <reaction evidence="1">
        <text>D-arabinose 5-phosphate + phosphoenolpyruvate + H2O = 3-deoxy-alpha-D-manno-2-octulosonate-8-phosphate + phosphate</text>
        <dbReference type="Rhea" id="RHEA:14053"/>
        <dbReference type="ChEBI" id="CHEBI:15377"/>
        <dbReference type="ChEBI" id="CHEBI:43474"/>
        <dbReference type="ChEBI" id="CHEBI:57693"/>
        <dbReference type="ChEBI" id="CHEBI:58702"/>
        <dbReference type="ChEBI" id="CHEBI:85985"/>
        <dbReference type="EC" id="2.5.1.55"/>
    </reaction>
</comment>
<comment type="pathway">
    <text evidence="1">Carbohydrate biosynthesis; 3-deoxy-D-manno-octulosonate biosynthesis; 3-deoxy-D-manno-octulosonate from D-ribulose 5-phosphate: step 2/3.</text>
</comment>
<comment type="pathway">
    <text evidence="1">Bacterial outer membrane biogenesis; lipopolysaccharide biosynthesis.</text>
</comment>
<comment type="subcellular location">
    <subcellularLocation>
        <location evidence="1">Cytoplasm</location>
    </subcellularLocation>
</comment>
<comment type="similarity">
    <text evidence="1">Belongs to the KdsA family.</text>
</comment>
<reference key="1">
    <citation type="submission" date="2007-08" db="EMBL/GenBank/DDBJ databases">
        <authorList>
            <consortium name="The Vibrio harveyi Genome Sequencing Project"/>
            <person name="Bassler B."/>
            <person name="Clifton S.W."/>
            <person name="Fulton L."/>
            <person name="Delehaunty K."/>
            <person name="Fronick C."/>
            <person name="Harrison M."/>
            <person name="Markivic C."/>
            <person name="Fulton R."/>
            <person name="Tin-Wollam A.-M."/>
            <person name="Shah N."/>
            <person name="Pepin K."/>
            <person name="Nash W."/>
            <person name="Thiruvilangam P."/>
            <person name="Bhonagiri V."/>
            <person name="Waters C."/>
            <person name="Tu K.C."/>
            <person name="Irgon J."/>
            <person name="Wilson R.K."/>
        </authorList>
    </citation>
    <scope>NUCLEOTIDE SEQUENCE [LARGE SCALE GENOMIC DNA]</scope>
    <source>
        <strain>ATCC BAA-1116 / BB120</strain>
    </source>
</reference>
<dbReference type="EC" id="2.5.1.55" evidence="1"/>
<dbReference type="EMBL" id="CP000789">
    <property type="protein sequence ID" value="ABU70233.1"/>
    <property type="molecule type" value="Genomic_DNA"/>
</dbReference>
<dbReference type="RefSeq" id="WP_012127204.1">
    <property type="nucleotide sequence ID" value="NC_022269.1"/>
</dbReference>
<dbReference type="SMR" id="A7MY69"/>
<dbReference type="GeneID" id="47657508"/>
<dbReference type="KEGG" id="vha:VIBHAR_01254"/>
<dbReference type="PATRIC" id="fig|338187.25.peg.1388"/>
<dbReference type="UniPathway" id="UPA00030"/>
<dbReference type="UniPathway" id="UPA00357">
    <property type="reaction ID" value="UER00474"/>
</dbReference>
<dbReference type="Proteomes" id="UP000008152">
    <property type="component" value="Chromosome I"/>
</dbReference>
<dbReference type="GO" id="GO:0005737">
    <property type="term" value="C:cytoplasm"/>
    <property type="evidence" value="ECO:0007669"/>
    <property type="project" value="UniProtKB-SubCell"/>
</dbReference>
<dbReference type="GO" id="GO:0008676">
    <property type="term" value="F:3-deoxy-8-phosphooctulonate synthase activity"/>
    <property type="evidence" value="ECO:0007669"/>
    <property type="project" value="UniProtKB-UniRule"/>
</dbReference>
<dbReference type="GO" id="GO:0019294">
    <property type="term" value="P:keto-3-deoxy-D-manno-octulosonic acid biosynthetic process"/>
    <property type="evidence" value="ECO:0007669"/>
    <property type="project" value="UniProtKB-UniRule"/>
</dbReference>
<dbReference type="FunFam" id="3.20.20.70:FF:000058">
    <property type="entry name" value="2-dehydro-3-deoxyphosphooctonate aldolase"/>
    <property type="match status" value="1"/>
</dbReference>
<dbReference type="Gene3D" id="3.20.20.70">
    <property type="entry name" value="Aldolase class I"/>
    <property type="match status" value="1"/>
</dbReference>
<dbReference type="HAMAP" id="MF_00056">
    <property type="entry name" value="KDO8P_synth"/>
    <property type="match status" value="1"/>
</dbReference>
<dbReference type="InterPro" id="IPR013785">
    <property type="entry name" value="Aldolase_TIM"/>
</dbReference>
<dbReference type="InterPro" id="IPR006218">
    <property type="entry name" value="DAHP1/KDSA"/>
</dbReference>
<dbReference type="InterPro" id="IPR006269">
    <property type="entry name" value="KDO8P_synthase"/>
</dbReference>
<dbReference type="NCBIfam" id="TIGR01362">
    <property type="entry name" value="KDO8P_synth"/>
    <property type="match status" value="1"/>
</dbReference>
<dbReference type="NCBIfam" id="NF003543">
    <property type="entry name" value="PRK05198.1"/>
    <property type="match status" value="1"/>
</dbReference>
<dbReference type="NCBIfam" id="NF009109">
    <property type="entry name" value="PRK12457.1"/>
    <property type="match status" value="1"/>
</dbReference>
<dbReference type="PANTHER" id="PTHR21057">
    <property type="entry name" value="PHOSPHO-2-DEHYDRO-3-DEOXYHEPTONATE ALDOLASE"/>
    <property type="match status" value="1"/>
</dbReference>
<dbReference type="Pfam" id="PF00793">
    <property type="entry name" value="DAHP_synth_1"/>
    <property type="match status" value="1"/>
</dbReference>
<dbReference type="SUPFAM" id="SSF51569">
    <property type="entry name" value="Aldolase"/>
    <property type="match status" value="1"/>
</dbReference>
<proteinExistence type="inferred from homology"/>
<protein>
    <recommendedName>
        <fullName evidence="1">2-dehydro-3-deoxyphosphooctonate aldolase</fullName>
        <ecNumber evidence="1">2.5.1.55</ecNumber>
    </recommendedName>
    <alternativeName>
        <fullName evidence="1">3-deoxy-D-manno-octulosonic acid 8-phosphate synthase</fullName>
    </alternativeName>
    <alternativeName>
        <fullName evidence="1">KDO-8-phosphate synthase</fullName>
        <shortName evidence="1">KDO 8-P synthase</shortName>
        <shortName evidence="1">KDOPS</shortName>
    </alternativeName>
    <alternativeName>
        <fullName evidence="1">Phospho-2-dehydro-3-deoxyoctonate aldolase</fullName>
    </alternativeName>
</protein>
<sequence length="283" mass="30746">MEQKIVNIGDIQVANDKPFTLFAGMNVLESRDLAMQICEHYVKVTDKLGIPYVFKASFDKANRSSVHSYRGPGLEEGMKIFQELKDTFGVKIITDVHTEAQAQPVADVVDVIQLPAFLARQTDLVEAMAKTGAVINVKKPQFMSPGQVGNIVEKFAECGNENIILCERGSCMGYDNLVVDMLGFGVMKNASKGSPIIFDVTHSLQMRDPSGAASGGRREQTVELAKAGLATGIAGLFIEAHPNPDQARCDGPSALPLDKLEPFLAQMKSLDDLIKSFADIDIK</sequence>
<gene>
    <name evidence="1" type="primary">kdsA</name>
    <name type="ordered locus">VIBHAR_01254</name>
</gene>
<organism>
    <name type="scientific">Vibrio campbellii (strain ATCC BAA-1116)</name>
    <dbReference type="NCBI Taxonomy" id="2902295"/>
    <lineage>
        <taxon>Bacteria</taxon>
        <taxon>Pseudomonadati</taxon>
        <taxon>Pseudomonadota</taxon>
        <taxon>Gammaproteobacteria</taxon>
        <taxon>Vibrionales</taxon>
        <taxon>Vibrionaceae</taxon>
        <taxon>Vibrio</taxon>
    </lineage>
</organism>